<sequence length="916" mass="98788">MASFRAMTIQQPISVPVPQEATPAEAPAKLTPMMEQYLDIKAAHPGLMLFYRMGDFYELFFEDAEVASKALGIVLTKRGKHQGQDIPMCGVPVERSEDYLHRLIAQGIRVAVCEQMEDPAAARARGNKSVVKRGVVRVVTPGTLTEDNLLDARANNYLLSIARSRGSSGGDRLGLAWIDISTSDFIVTECAFAELTATLARINPNEVIVSDALYSDEAFEPVLRELAAVTPLTRDVFDGATAERRLCDYFAVATMDGLAVLSRLEATAAAACVTYVERTQVGQRPPLAPPAREATGSTMAIDPATRANLELTRTLAGERRGSLLDAIDCTVTSAGSRLLAQRLAAPLTEPAQIGRRLDAVNAFVADSAAREDIRVILRGAPDMTRAMARLSVGRGGPRDLAALRDGILAADQALARLSVLDQPPQEIASVMAALARPARALADEFARALDEQLPLIKRDGGFVRSGYDATLDETRNLRDASRLVVASMQARYADQTGVKALKIRHNNVLGYFVEVTAQHGDKLMSAPLNATFIHRQTLAGQVRFTTSELGEIEAKIANAGERALNLELEIFDRLCAQALAIGDDLRAAAHGFAMLDVATALAKLALDDNYVRPEVDGSLGFAIEGGRHPVVEQSLKREGQPFIANSCDLSPTPGHKSGQLWLLTGPNMAGKSTFLRQNALIALLAQIGSFVPASRARIGIVDRLFSRVGAADDLARGRSTFMVEMVETAAILNQAGERALVILDEIGRGTATFDGLSIAWAAIEHLHESNRCRTLFATHYHELTALAAKLPRLFNATVRVKEWQGDVVFLHEVLPGSADRSYGIQVAKLAGLPPAVISRAKSVLAKLEAADRGQNARALVDDLPLFAVPSRAAVEPAMSKETEELIAAVKDLHPDEMTPREALDALYRLKAKLPAK</sequence>
<comment type="function">
    <text evidence="1">This protein is involved in the repair of mismatches in DNA. It is possible that it carries out the mismatch recognition step. This protein has a weak ATPase activity.</text>
</comment>
<comment type="similarity">
    <text evidence="1">Belongs to the DNA mismatch repair MutS family.</text>
</comment>
<protein>
    <recommendedName>
        <fullName evidence="1">DNA mismatch repair protein MutS</fullName>
    </recommendedName>
</protein>
<reference key="1">
    <citation type="journal article" date="2007" name="Science">
        <title>Legumes symbioses: absence of nod genes in photosynthetic bradyrhizobia.</title>
        <authorList>
            <person name="Giraud E."/>
            <person name="Moulin L."/>
            <person name="Vallenet D."/>
            <person name="Barbe V."/>
            <person name="Cytryn E."/>
            <person name="Avarre J.-C."/>
            <person name="Jaubert M."/>
            <person name="Simon D."/>
            <person name="Cartieaux F."/>
            <person name="Prin Y."/>
            <person name="Bena G."/>
            <person name="Hannibal L."/>
            <person name="Fardoux J."/>
            <person name="Kojadinovic M."/>
            <person name="Vuillet L."/>
            <person name="Lajus A."/>
            <person name="Cruveiller S."/>
            <person name="Rouy Z."/>
            <person name="Mangenot S."/>
            <person name="Segurens B."/>
            <person name="Dossat C."/>
            <person name="Franck W.L."/>
            <person name="Chang W.-S."/>
            <person name="Saunders E."/>
            <person name="Bruce D."/>
            <person name="Richardson P."/>
            <person name="Normand P."/>
            <person name="Dreyfus B."/>
            <person name="Pignol D."/>
            <person name="Stacey G."/>
            <person name="Emerich D."/>
            <person name="Vermeglio A."/>
            <person name="Medigue C."/>
            <person name="Sadowsky M."/>
        </authorList>
    </citation>
    <scope>NUCLEOTIDE SEQUENCE [LARGE SCALE GENOMIC DNA]</scope>
    <source>
        <strain>ORS 278</strain>
    </source>
</reference>
<dbReference type="EMBL" id="CU234118">
    <property type="protein sequence ID" value="CAL74476.1"/>
    <property type="molecule type" value="Genomic_DNA"/>
</dbReference>
<dbReference type="SMR" id="A4YKQ0"/>
<dbReference type="STRING" id="114615.BRADO0537"/>
<dbReference type="KEGG" id="bra:BRADO0537"/>
<dbReference type="eggNOG" id="COG0249">
    <property type="taxonomic scope" value="Bacteria"/>
</dbReference>
<dbReference type="HOGENOM" id="CLU_002472_1_3_5"/>
<dbReference type="Proteomes" id="UP000001994">
    <property type="component" value="Chromosome"/>
</dbReference>
<dbReference type="GO" id="GO:0005829">
    <property type="term" value="C:cytosol"/>
    <property type="evidence" value="ECO:0007669"/>
    <property type="project" value="TreeGrafter"/>
</dbReference>
<dbReference type="GO" id="GO:0005524">
    <property type="term" value="F:ATP binding"/>
    <property type="evidence" value="ECO:0007669"/>
    <property type="project" value="UniProtKB-UniRule"/>
</dbReference>
<dbReference type="GO" id="GO:0140664">
    <property type="term" value="F:ATP-dependent DNA damage sensor activity"/>
    <property type="evidence" value="ECO:0007669"/>
    <property type="project" value="InterPro"/>
</dbReference>
<dbReference type="GO" id="GO:0003684">
    <property type="term" value="F:damaged DNA binding"/>
    <property type="evidence" value="ECO:0007669"/>
    <property type="project" value="UniProtKB-UniRule"/>
</dbReference>
<dbReference type="GO" id="GO:0030983">
    <property type="term" value="F:mismatched DNA binding"/>
    <property type="evidence" value="ECO:0007669"/>
    <property type="project" value="InterPro"/>
</dbReference>
<dbReference type="GO" id="GO:0006298">
    <property type="term" value="P:mismatch repair"/>
    <property type="evidence" value="ECO:0007669"/>
    <property type="project" value="UniProtKB-UniRule"/>
</dbReference>
<dbReference type="CDD" id="cd03284">
    <property type="entry name" value="ABC_MutS1"/>
    <property type="match status" value="1"/>
</dbReference>
<dbReference type="FunFam" id="3.40.1170.10:FF:000001">
    <property type="entry name" value="DNA mismatch repair protein MutS"/>
    <property type="match status" value="1"/>
</dbReference>
<dbReference type="FunFam" id="3.40.50.300:FF:001579">
    <property type="entry name" value="DNA mismatch repair protein MutS"/>
    <property type="match status" value="1"/>
</dbReference>
<dbReference type="Gene3D" id="1.10.1420.10">
    <property type="match status" value="2"/>
</dbReference>
<dbReference type="Gene3D" id="6.10.140.430">
    <property type="match status" value="1"/>
</dbReference>
<dbReference type="Gene3D" id="3.40.1170.10">
    <property type="entry name" value="DNA repair protein MutS, domain I"/>
    <property type="match status" value="1"/>
</dbReference>
<dbReference type="Gene3D" id="3.30.420.110">
    <property type="entry name" value="MutS, connector domain"/>
    <property type="match status" value="1"/>
</dbReference>
<dbReference type="Gene3D" id="3.40.50.300">
    <property type="entry name" value="P-loop containing nucleotide triphosphate hydrolases"/>
    <property type="match status" value="1"/>
</dbReference>
<dbReference type="HAMAP" id="MF_00096">
    <property type="entry name" value="MutS"/>
    <property type="match status" value="1"/>
</dbReference>
<dbReference type="InterPro" id="IPR005748">
    <property type="entry name" value="DNA_mismatch_repair_MutS"/>
</dbReference>
<dbReference type="InterPro" id="IPR007695">
    <property type="entry name" value="DNA_mismatch_repair_MutS-lik_N"/>
</dbReference>
<dbReference type="InterPro" id="IPR017261">
    <property type="entry name" value="DNA_mismatch_repair_MutS/MSH"/>
</dbReference>
<dbReference type="InterPro" id="IPR000432">
    <property type="entry name" value="DNA_mismatch_repair_MutS_C"/>
</dbReference>
<dbReference type="InterPro" id="IPR007861">
    <property type="entry name" value="DNA_mismatch_repair_MutS_clamp"/>
</dbReference>
<dbReference type="InterPro" id="IPR007696">
    <property type="entry name" value="DNA_mismatch_repair_MutS_core"/>
</dbReference>
<dbReference type="InterPro" id="IPR016151">
    <property type="entry name" value="DNA_mismatch_repair_MutS_N"/>
</dbReference>
<dbReference type="InterPro" id="IPR036187">
    <property type="entry name" value="DNA_mismatch_repair_MutS_sf"/>
</dbReference>
<dbReference type="InterPro" id="IPR007860">
    <property type="entry name" value="DNA_mmatch_repair_MutS_con_dom"/>
</dbReference>
<dbReference type="InterPro" id="IPR045076">
    <property type="entry name" value="MutS"/>
</dbReference>
<dbReference type="InterPro" id="IPR036678">
    <property type="entry name" value="MutS_con_dom_sf"/>
</dbReference>
<dbReference type="InterPro" id="IPR027417">
    <property type="entry name" value="P-loop_NTPase"/>
</dbReference>
<dbReference type="NCBIfam" id="TIGR01070">
    <property type="entry name" value="mutS1"/>
    <property type="match status" value="1"/>
</dbReference>
<dbReference type="NCBIfam" id="NF003810">
    <property type="entry name" value="PRK05399.1"/>
    <property type="match status" value="1"/>
</dbReference>
<dbReference type="PANTHER" id="PTHR11361:SF34">
    <property type="entry name" value="DNA MISMATCH REPAIR PROTEIN MSH1, MITOCHONDRIAL"/>
    <property type="match status" value="1"/>
</dbReference>
<dbReference type="PANTHER" id="PTHR11361">
    <property type="entry name" value="DNA MISMATCH REPAIR PROTEIN MUTS FAMILY MEMBER"/>
    <property type="match status" value="1"/>
</dbReference>
<dbReference type="Pfam" id="PF01624">
    <property type="entry name" value="MutS_I"/>
    <property type="match status" value="1"/>
</dbReference>
<dbReference type="Pfam" id="PF05188">
    <property type="entry name" value="MutS_II"/>
    <property type="match status" value="1"/>
</dbReference>
<dbReference type="Pfam" id="PF05192">
    <property type="entry name" value="MutS_III"/>
    <property type="match status" value="1"/>
</dbReference>
<dbReference type="Pfam" id="PF05190">
    <property type="entry name" value="MutS_IV"/>
    <property type="match status" value="1"/>
</dbReference>
<dbReference type="Pfam" id="PF00488">
    <property type="entry name" value="MutS_V"/>
    <property type="match status" value="1"/>
</dbReference>
<dbReference type="PIRSF" id="PIRSF037677">
    <property type="entry name" value="DNA_mis_repair_Msh6"/>
    <property type="match status" value="1"/>
</dbReference>
<dbReference type="SMART" id="SM00534">
    <property type="entry name" value="MUTSac"/>
    <property type="match status" value="1"/>
</dbReference>
<dbReference type="SMART" id="SM00533">
    <property type="entry name" value="MUTSd"/>
    <property type="match status" value="1"/>
</dbReference>
<dbReference type="SUPFAM" id="SSF55271">
    <property type="entry name" value="DNA repair protein MutS, domain I"/>
    <property type="match status" value="1"/>
</dbReference>
<dbReference type="SUPFAM" id="SSF53150">
    <property type="entry name" value="DNA repair protein MutS, domain II"/>
    <property type="match status" value="1"/>
</dbReference>
<dbReference type="SUPFAM" id="SSF48334">
    <property type="entry name" value="DNA repair protein MutS, domain III"/>
    <property type="match status" value="1"/>
</dbReference>
<dbReference type="SUPFAM" id="SSF52540">
    <property type="entry name" value="P-loop containing nucleoside triphosphate hydrolases"/>
    <property type="match status" value="1"/>
</dbReference>
<dbReference type="PROSITE" id="PS00486">
    <property type="entry name" value="DNA_MISMATCH_REPAIR_2"/>
    <property type="match status" value="1"/>
</dbReference>
<organism>
    <name type="scientific">Bradyrhizobium sp. (strain ORS 278)</name>
    <dbReference type="NCBI Taxonomy" id="114615"/>
    <lineage>
        <taxon>Bacteria</taxon>
        <taxon>Pseudomonadati</taxon>
        <taxon>Pseudomonadota</taxon>
        <taxon>Alphaproteobacteria</taxon>
        <taxon>Hyphomicrobiales</taxon>
        <taxon>Nitrobacteraceae</taxon>
        <taxon>Bradyrhizobium</taxon>
    </lineage>
</organism>
<keyword id="KW-0067">ATP-binding</keyword>
<keyword id="KW-0227">DNA damage</keyword>
<keyword id="KW-0234">DNA repair</keyword>
<keyword id="KW-0238">DNA-binding</keyword>
<keyword id="KW-0547">Nucleotide-binding</keyword>
<keyword id="KW-1185">Reference proteome</keyword>
<gene>
    <name evidence="1" type="primary">mutS</name>
    <name type="ordered locus">BRADO0537</name>
</gene>
<proteinExistence type="inferred from homology"/>
<evidence type="ECO:0000255" key="1">
    <source>
        <dbReference type="HAMAP-Rule" id="MF_00096"/>
    </source>
</evidence>
<feature type="chain" id="PRO_0000335121" description="DNA mismatch repair protein MutS">
    <location>
        <begin position="1"/>
        <end position="916"/>
    </location>
</feature>
<feature type="binding site" evidence="1">
    <location>
        <begin position="665"/>
        <end position="672"/>
    </location>
    <ligand>
        <name>ATP</name>
        <dbReference type="ChEBI" id="CHEBI:30616"/>
    </ligand>
</feature>
<accession>A4YKQ0</accession>
<name>MUTS_BRASO</name>